<proteinExistence type="evidence at transcript level"/>
<accession>Q5RBL2</accession>
<name>MIME_PONAB</name>
<comment type="function">
    <text evidence="2">Induces bone formation in conjunction with TGF-beta-1 or TGF-beta-2.</text>
</comment>
<comment type="subcellular location">
    <subcellularLocation>
        <location evidence="3">Secreted</location>
        <location evidence="3">Extracellular space</location>
        <location evidence="3">Extracellular matrix</location>
    </subcellularLocation>
</comment>
<comment type="PTM">
    <text evidence="2">Contains keratan sulfate.</text>
</comment>
<comment type="similarity">
    <text evidence="5">Belongs to the small leucine-rich proteoglycan (SLRP) family. SLRP class III subfamily.</text>
</comment>
<gene>
    <name type="primary">OGN</name>
</gene>
<feature type="signal peptide" evidence="1">
    <location>
        <begin position="1"/>
        <end position="20"/>
    </location>
</feature>
<feature type="chain" id="PRO_0000240315" description="Mimecan">
    <location>
        <begin position="21"/>
        <end position="298"/>
    </location>
</feature>
<feature type="repeat" description="LRR 1">
    <location>
        <begin position="112"/>
        <end position="131"/>
    </location>
</feature>
<feature type="repeat" description="LRR 2">
    <location>
        <begin position="132"/>
        <end position="155"/>
    </location>
</feature>
<feature type="repeat" description="LRR 3">
    <location>
        <begin position="156"/>
        <end position="179"/>
    </location>
</feature>
<feature type="repeat" description="LRR 4">
    <location>
        <begin position="180"/>
        <end position="199"/>
    </location>
</feature>
<feature type="repeat" description="LRR 5">
    <location>
        <begin position="200"/>
        <end position="225"/>
    </location>
</feature>
<feature type="repeat" description="LRR 6">
    <location>
        <begin position="226"/>
        <end position="246"/>
    </location>
</feature>
<feature type="repeat" description="LRR 7">
    <location>
        <begin position="247"/>
        <end position="277"/>
    </location>
</feature>
<feature type="glycosylation site" description="N-linked (GlcNAc...) (keratan sulfate) asparagine" evidence="4">
    <location>
        <position position="88"/>
    </location>
</feature>
<feature type="glycosylation site" description="N-linked (GlcNAc...) (keratan sulfate) asparagine" evidence="4">
    <location>
        <position position="214"/>
    </location>
</feature>
<feature type="glycosylation site" description="N-linked (GlcNAc...) (keratan sulfate) asparagine" evidence="4">
    <location>
        <position position="258"/>
    </location>
</feature>
<feature type="disulfide bond" evidence="2">
    <location>
        <begin position="255"/>
        <end position="288"/>
    </location>
</feature>
<evidence type="ECO:0000250" key="1"/>
<evidence type="ECO:0000250" key="2">
    <source>
        <dbReference type="UniProtKB" id="P19879"/>
    </source>
</evidence>
<evidence type="ECO:0000250" key="3">
    <source>
        <dbReference type="UniProtKB" id="Q8MJF1"/>
    </source>
</evidence>
<evidence type="ECO:0000255" key="4"/>
<evidence type="ECO:0000305" key="5"/>
<sequence>MKTLQSTLLLLLFVPLIKPAPPTQQDSRIIYDYGTDNFEESIFSQDYEDKYLDGKNIKEKETVIIPNEKSLQLQKDEAITPLPPKKENDEMPTCLLCVCLSGSVYCEEVDIDAVPPLPKESAYLYARFNKIKKLTAKDFADIPNLRRLDFTGNLIEDIEDGTFSKLSLLEELSLAENQLLKLPVLPPKLTLFNAKYNKIKSRGIKANAFKKLNNLTFLYLDHNALESVPLNLPESLRVIHLQFNNIASITDDTFCKANDTSYIRDRIEEIRLEGNPIVLGKHPNSFICLKRLPIGSYF</sequence>
<organism>
    <name type="scientific">Pongo abelii</name>
    <name type="common">Sumatran orangutan</name>
    <name type="synonym">Pongo pygmaeus abelii</name>
    <dbReference type="NCBI Taxonomy" id="9601"/>
    <lineage>
        <taxon>Eukaryota</taxon>
        <taxon>Metazoa</taxon>
        <taxon>Chordata</taxon>
        <taxon>Craniata</taxon>
        <taxon>Vertebrata</taxon>
        <taxon>Euteleostomi</taxon>
        <taxon>Mammalia</taxon>
        <taxon>Eutheria</taxon>
        <taxon>Euarchontoglires</taxon>
        <taxon>Primates</taxon>
        <taxon>Haplorrhini</taxon>
        <taxon>Catarrhini</taxon>
        <taxon>Hominidae</taxon>
        <taxon>Pongo</taxon>
    </lineage>
</organism>
<reference key="1">
    <citation type="submission" date="2004-11" db="EMBL/GenBank/DDBJ databases">
        <authorList>
            <consortium name="The German cDNA consortium"/>
        </authorList>
    </citation>
    <scope>NUCLEOTIDE SEQUENCE [LARGE SCALE MRNA]</scope>
    <source>
        <tissue>Brain cortex</tissue>
    </source>
</reference>
<keyword id="KW-1015">Disulfide bond</keyword>
<keyword id="KW-0272">Extracellular matrix</keyword>
<keyword id="KW-0325">Glycoprotein</keyword>
<keyword id="KW-0339">Growth factor</keyword>
<keyword id="KW-0433">Leucine-rich repeat</keyword>
<keyword id="KW-0654">Proteoglycan</keyword>
<keyword id="KW-1185">Reference proteome</keyword>
<keyword id="KW-0677">Repeat</keyword>
<keyword id="KW-0964">Secreted</keyword>
<keyword id="KW-0732">Signal</keyword>
<dbReference type="EMBL" id="CR858628">
    <property type="protein sequence ID" value="CAH90848.1"/>
    <property type="molecule type" value="mRNA"/>
</dbReference>
<dbReference type="RefSeq" id="NP_001125484.1">
    <property type="nucleotide sequence ID" value="NM_001132012.1"/>
</dbReference>
<dbReference type="SMR" id="Q5RBL2"/>
<dbReference type="FunCoup" id="Q5RBL2">
    <property type="interactions" value="256"/>
</dbReference>
<dbReference type="STRING" id="9601.ENSPPYP00000021715"/>
<dbReference type="GlyCosmos" id="Q5RBL2">
    <property type="glycosylation" value="2 sites, No reported glycans"/>
</dbReference>
<dbReference type="Ensembl" id="ENSPPYT00000022602.2">
    <property type="protein sequence ID" value="ENSPPYP00000021715.1"/>
    <property type="gene ID" value="ENSPPYG00000019377.2"/>
</dbReference>
<dbReference type="GeneID" id="100172393"/>
<dbReference type="KEGG" id="pon:100172393"/>
<dbReference type="CTD" id="4969"/>
<dbReference type="eggNOG" id="KOG0619">
    <property type="taxonomic scope" value="Eukaryota"/>
</dbReference>
<dbReference type="GeneTree" id="ENSGT00940000157238"/>
<dbReference type="HOGENOM" id="CLU_067583_1_0_1"/>
<dbReference type="InParanoid" id="Q5RBL2"/>
<dbReference type="OMA" id="RIIHLQF"/>
<dbReference type="OrthoDB" id="7451790at2759"/>
<dbReference type="TreeFam" id="TF351924"/>
<dbReference type="Proteomes" id="UP000001595">
    <property type="component" value="Chromosome 9"/>
</dbReference>
<dbReference type="GO" id="GO:0031012">
    <property type="term" value="C:extracellular matrix"/>
    <property type="evidence" value="ECO:0007669"/>
    <property type="project" value="TreeGrafter"/>
</dbReference>
<dbReference type="GO" id="GO:0005615">
    <property type="term" value="C:extracellular space"/>
    <property type="evidence" value="ECO:0007669"/>
    <property type="project" value="TreeGrafter"/>
</dbReference>
<dbReference type="GO" id="GO:0008083">
    <property type="term" value="F:growth factor activity"/>
    <property type="evidence" value="ECO:0007669"/>
    <property type="project" value="UniProtKB-KW"/>
</dbReference>
<dbReference type="GO" id="GO:0061975">
    <property type="term" value="P:articular cartilage development"/>
    <property type="evidence" value="ECO:0007669"/>
    <property type="project" value="TreeGrafter"/>
</dbReference>
<dbReference type="GO" id="GO:0060348">
    <property type="term" value="P:bone development"/>
    <property type="evidence" value="ECO:0007669"/>
    <property type="project" value="TreeGrafter"/>
</dbReference>
<dbReference type="FunFam" id="3.80.10.10:FF:000335">
    <property type="entry name" value="mimecan"/>
    <property type="match status" value="1"/>
</dbReference>
<dbReference type="Gene3D" id="3.80.10.10">
    <property type="entry name" value="Ribonuclease Inhibitor"/>
    <property type="match status" value="1"/>
</dbReference>
<dbReference type="InterPro" id="IPR001611">
    <property type="entry name" value="Leu-rich_rpt"/>
</dbReference>
<dbReference type="InterPro" id="IPR003591">
    <property type="entry name" value="Leu-rich_rpt_typical-subtyp"/>
</dbReference>
<dbReference type="InterPro" id="IPR032675">
    <property type="entry name" value="LRR_dom_sf"/>
</dbReference>
<dbReference type="InterPro" id="IPR043547">
    <property type="entry name" value="Mimecan/Epiphycan/Opticin"/>
</dbReference>
<dbReference type="PANTHER" id="PTHR46269">
    <property type="entry name" value="EPIPHYCAN-RELATED"/>
    <property type="match status" value="1"/>
</dbReference>
<dbReference type="PANTHER" id="PTHR46269:SF1">
    <property type="entry name" value="MIMECAN"/>
    <property type="match status" value="1"/>
</dbReference>
<dbReference type="Pfam" id="PF13855">
    <property type="entry name" value="LRR_8"/>
    <property type="match status" value="1"/>
</dbReference>
<dbReference type="SMART" id="SM00369">
    <property type="entry name" value="LRR_TYP"/>
    <property type="match status" value="4"/>
</dbReference>
<dbReference type="SUPFAM" id="SSF52058">
    <property type="entry name" value="L domain-like"/>
    <property type="match status" value="1"/>
</dbReference>
<dbReference type="PROSITE" id="PS51450">
    <property type="entry name" value="LRR"/>
    <property type="match status" value="4"/>
</dbReference>
<protein>
    <recommendedName>
        <fullName>Mimecan</fullName>
    </recommendedName>
    <alternativeName>
        <fullName>Osteoglycin</fullName>
    </alternativeName>
</protein>